<dbReference type="EC" id="6.1.1.3" evidence="1"/>
<dbReference type="EMBL" id="CP000431">
    <property type="protein sequence ID" value="ABG98644.1"/>
    <property type="molecule type" value="Genomic_DNA"/>
</dbReference>
<dbReference type="RefSeq" id="WP_009480122.1">
    <property type="nucleotide sequence ID" value="NC_008268.1"/>
</dbReference>
<dbReference type="SMR" id="Q0S1E2"/>
<dbReference type="KEGG" id="rha:RHA1_ro06878"/>
<dbReference type="eggNOG" id="COG0441">
    <property type="taxonomic scope" value="Bacteria"/>
</dbReference>
<dbReference type="HOGENOM" id="CLU_008554_0_1_11"/>
<dbReference type="OrthoDB" id="9802304at2"/>
<dbReference type="Proteomes" id="UP000008710">
    <property type="component" value="Chromosome"/>
</dbReference>
<dbReference type="GO" id="GO:0005737">
    <property type="term" value="C:cytoplasm"/>
    <property type="evidence" value="ECO:0007669"/>
    <property type="project" value="UniProtKB-SubCell"/>
</dbReference>
<dbReference type="GO" id="GO:0005524">
    <property type="term" value="F:ATP binding"/>
    <property type="evidence" value="ECO:0007669"/>
    <property type="project" value="UniProtKB-UniRule"/>
</dbReference>
<dbReference type="GO" id="GO:0046872">
    <property type="term" value="F:metal ion binding"/>
    <property type="evidence" value="ECO:0007669"/>
    <property type="project" value="UniProtKB-KW"/>
</dbReference>
<dbReference type="GO" id="GO:0004829">
    <property type="term" value="F:threonine-tRNA ligase activity"/>
    <property type="evidence" value="ECO:0007669"/>
    <property type="project" value="UniProtKB-UniRule"/>
</dbReference>
<dbReference type="GO" id="GO:0000049">
    <property type="term" value="F:tRNA binding"/>
    <property type="evidence" value="ECO:0007669"/>
    <property type="project" value="UniProtKB-KW"/>
</dbReference>
<dbReference type="GO" id="GO:0006435">
    <property type="term" value="P:threonyl-tRNA aminoacylation"/>
    <property type="evidence" value="ECO:0007669"/>
    <property type="project" value="UniProtKB-UniRule"/>
</dbReference>
<dbReference type="CDD" id="cd00860">
    <property type="entry name" value="ThrRS_anticodon"/>
    <property type="match status" value="1"/>
</dbReference>
<dbReference type="CDD" id="cd00771">
    <property type="entry name" value="ThrRS_core"/>
    <property type="match status" value="1"/>
</dbReference>
<dbReference type="FunFam" id="3.30.54.20:FF:000003">
    <property type="entry name" value="Threonine--tRNA ligase"/>
    <property type="match status" value="1"/>
</dbReference>
<dbReference type="FunFam" id="3.30.930.10:FF:000019">
    <property type="entry name" value="Threonine--tRNA ligase"/>
    <property type="match status" value="1"/>
</dbReference>
<dbReference type="FunFam" id="3.40.50.800:FF:000001">
    <property type="entry name" value="Threonine--tRNA ligase"/>
    <property type="match status" value="1"/>
</dbReference>
<dbReference type="FunFam" id="3.30.980.10:FF:000005">
    <property type="entry name" value="Threonyl-tRNA synthetase, mitochondrial"/>
    <property type="match status" value="1"/>
</dbReference>
<dbReference type="Gene3D" id="3.30.54.20">
    <property type="match status" value="1"/>
</dbReference>
<dbReference type="Gene3D" id="3.40.50.800">
    <property type="entry name" value="Anticodon-binding domain"/>
    <property type="match status" value="1"/>
</dbReference>
<dbReference type="Gene3D" id="3.30.930.10">
    <property type="entry name" value="Bira Bifunctional Protein, Domain 2"/>
    <property type="match status" value="1"/>
</dbReference>
<dbReference type="Gene3D" id="3.30.980.10">
    <property type="entry name" value="Threonyl-trna Synthetase, Chain A, domain 2"/>
    <property type="match status" value="1"/>
</dbReference>
<dbReference type="HAMAP" id="MF_00184">
    <property type="entry name" value="Thr_tRNA_synth"/>
    <property type="match status" value="1"/>
</dbReference>
<dbReference type="InterPro" id="IPR002314">
    <property type="entry name" value="aa-tRNA-synt_IIb"/>
</dbReference>
<dbReference type="InterPro" id="IPR006195">
    <property type="entry name" value="aa-tRNA-synth_II"/>
</dbReference>
<dbReference type="InterPro" id="IPR045864">
    <property type="entry name" value="aa-tRNA-synth_II/BPL/LPL"/>
</dbReference>
<dbReference type="InterPro" id="IPR004154">
    <property type="entry name" value="Anticodon-bd"/>
</dbReference>
<dbReference type="InterPro" id="IPR036621">
    <property type="entry name" value="Anticodon-bd_dom_sf"/>
</dbReference>
<dbReference type="InterPro" id="IPR004095">
    <property type="entry name" value="TGS"/>
</dbReference>
<dbReference type="InterPro" id="IPR002320">
    <property type="entry name" value="Thr-tRNA-ligase_IIa"/>
</dbReference>
<dbReference type="InterPro" id="IPR018163">
    <property type="entry name" value="Thr/Ala-tRNA-synth_IIc_edit"/>
</dbReference>
<dbReference type="InterPro" id="IPR047246">
    <property type="entry name" value="ThrRS_anticodon"/>
</dbReference>
<dbReference type="InterPro" id="IPR033728">
    <property type="entry name" value="ThrRS_core"/>
</dbReference>
<dbReference type="InterPro" id="IPR012947">
    <property type="entry name" value="tRNA_SAD"/>
</dbReference>
<dbReference type="NCBIfam" id="TIGR00418">
    <property type="entry name" value="thrS"/>
    <property type="match status" value="1"/>
</dbReference>
<dbReference type="PANTHER" id="PTHR11451:SF44">
    <property type="entry name" value="THREONINE--TRNA LIGASE, CHLOROPLASTIC_MITOCHONDRIAL 2"/>
    <property type="match status" value="1"/>
</dbReference>
<dbReference type="PANTHER" id="PTHR11451">
    <property type="entry name" value="THREONINE-TRNA LIGASE"/>
    <property type="match status" value="1"/>
</dbReference>
<dbReference type="Pfam" id="PF03129">
    <property type="entry name" value="HGTP_anticodon"/>
    <property type="match status" value="1"/>
</dbReference>
<dbReference type="Pfam" id="PF00587">
    <property type="entry name" value="tRNA-synt_2b"/>
    <property type="match status" value="1"/>
</dbReference>
<dbReference type="Pfam" id="PF07973">
    <property type="entry name" value="tRNA_SAD"/>
    <property type="match status" value="1"/>
</dbReference>
<dbReference type="PRINTS" id="PR01047">
    <property type="entry name" value="TRNASYNTHTHR"/>
</dbReference>
<dbReference type="SMART" id="SM00863">
    <property type="entry name" value="tRNA_SAD"/>
    <property type="match status" value="1"/>
</dbReference>
<dbReference type="SUPFAM" id="SSF52954">
    <property type="entry name" value="Class II aaRS ABD-related"/>
    <property type="match status" value="1"/>
</dbReference>
<dbReference type="SUPFAM" id="SSF55681">
    <property type="entry name" value="Class II aaRS and biotin synthetases"/>
    <property type="match status" value="1"/>
</dbReference>
<dbReference type="SUPFAM" id="SSF55186">
    <property type="entry name" value="ThrRS/AlaRS common domain"/>
    <property type="match status" value="1"/>
</dbReference>
<dbReference type="PROSITE" id="PS50862">
    <property type="entry name" value="AA_TRNA_LIGASE_II"/>
    <property type="match status" value="1"/>
</dbReference>
<dbReference type="PROSITE" id="PS51880">
    <property type="entry name" value="TGS"/>
    <property type="match status" value="1"/>
</dbReference>
<keyword id="KW-0030">Aminoacyl-tRNA synthetase</keyword>
<keyword id="KW-0067">ATP-binding</keyword>
<keyword id="KW-0963">Cytoplasm</keyword>
<keyword id="KW-0436">Ligase</keyword>
<keyword id="KW-0479">Metal-binding</keyword>
<keyword id="KW-0547">Nucleotide-binding</keyword>
<keyword id="KW-0648">Protein biosynthesis</keyword>
<keyword id="KW-0694">RNA-binding</keyword>
<keyword id="KW-0820">tRNA-binding</keyword>
<keyword id="KW-0862">Zinc</keyword>
<evidence type="ECO:0000255" key="1">
    <source>
        <dbReference type="HAMAP-Rule" id="MF_00184"/>
    </source>
</evidence>
<evidence type="ECO:0000255" key="2">
    <source>
        <dbReference type="PROSITE-ProRule" id="PRU01228"/>
    </source>
</evidence>
<gene>
    <name evidence="1" type="primary">thrS</name>
    <name type="ordered locus">RHA1_ro06878</name>
</gene>
<organism>
    <name type="scientific">Rhodococcus jostii (strain RHA1)</name>
    <dbReference type="NCBI Taxonomy" id="101510"/>
    <lineage>
        <taxon>Bacteria</taxon>
        <taxon>Bacillati</taxon>
        <taxon>Actinomycetota</taxon>
        <taxon>Actinomycetes</taxon>
        <taxon>Mycobacteriales</taxon>
        <taxon>Nocardiaceae</taxon>
        <taxon>Rhodococcus</taxon>
    </lineage>
</organism>
<feature type="chain" id="PRO_1000020492" description="Threonine--tRNA ligase">
    <location>
        <begin position="1"/>
        <end position="685"/>
    </location>
</feature>
<feature type="domain" description="TGS" evidence="2">
    <location>
        <begin position="1"/>
        <end position="65"/>
    </location>
</feature>
<feature type="region of interest" description="Catalytic" evidence="1">
    <location>
        <begin position="262"/>
        <end position="568"/>
    </location>
</feature>
<feature type="binding site" evidence="1">
    <location>
        <position position="367"/>
    </location>
    <ligand>
        <name>Zn(2+)</name>
        <dbReference type="ChEBI" id="CHEBI:29105"/>
    </ligand>
</feature>
<feature type="binding site" evidence="1">
    <location>
        <position position="418"/>
    </location>
    <ligand>
        <name>Zn(2+)</name>
        <dbReference type="ChEBI" id="CHEBI:29105"/>
    </ligand>
</feature>
<feature type="binding site" evidence="1">
    <location>
        <position position="545"/>
    </location>
    <ligand>
        <name>Zn(2+)</name>
        <dbReference type="ChEBI" id="CHEBI:29105"/>
    </ligand>
</feature>
<comment type="function">
    <text evidence="1">Catalyzes the attachment of threonine to tRNA(Thr) in a two-step reaction: L-threonine is first activated by ATP to form Thr-AMP and then transferred to the acceptor end of tRNA(Thr). Also edits incorrectly charged L-seryl-tRNA(Thr).</text>
</comment>
<comment type="catalytic activity">
    <reaction evidence="1">
        <text>tRNA(Thr) + L-threonine + ATP = L-threonyl-tRNA(Thr) + AMP + diphosphate + H(+)</text>
        <dbReference type="Rhea" id="RHEA:24624"/>
        <dbReference type="Rhea" id="RHEA-COMP:9670"/>
        <dbReference type="Rhea" id="RHEA-COMP:9704"/>
        <dbReference type="ChEBI" id="CHEBI:15378"/>
        <dbReference type="ChEBI" id="CHEBI:30616"/>
        <dbReference type="ChEBI" id="CHEBI:33019"/>
        <dbReference type="ChEBI" id="CHEBI:57926"/>
        <dbReference type="ChEBI" id="CHEBI:78442"/>
        <dbReference type="ChEBI" id="CHEBI:78534"/>
        <dbReference type="ChEBI" id="CHEBI:456215"/>
        <dbReference type="EC" id="6.1.1.3"/>
    </reaction>
</comment>
<comment type="cofactor">
    <cofactor evidence="1">
        <name>Zn(2+)</name>
        <dbReference type="ChEBI" id="CHEBI:29105"/>
    </cofactor>
    <text evidence="1">Binds 1 zinc ion per subunit.</text>
</comment>
<comment type="subunit">
    <text evidence="1">Homodimer.</text>
</comment>
<comment type="subcellular location">
    <subcellularLocation>
        <location evidence="1">Cytoplasm</location>
    </subcellularLocation>
</comment>
<comment type="similarity">
    <text evidence="1">Belongs to the class-II aminoacyl-tRNA synthetase family.</text>
</comment>
<reference key="1">
    <citation type="journal article" date="2006" name="Proc. Natl. Acad. Sci. U.S.A.">
        <title>The complete genome of Rhodococcus sp. RHA1 provides insights into a catabolic powerhouse.</title>
        <authorList>
            <person name="McLeod M.P."/>
            <person name="Warren R.L."/>
            <person name="Hsiao W.W.L."/>
            <person name="Araki N."/>
            <person name="Myhre M."/>
            <person name="Fernandes C."/>
            <person name="Miyazawa D."/>
            <person name="Wong W."/>
            <person name="Lillquist A.L."/>
            <person name="Wang D."/>
            <person name="Dosanjh M."/>
            <person name="Hara H."/>
            <person name="Petrescu A."/>
            <person name="Morin R.D."/>
            <person name="Yang G."/>
            <person name="Stott J.M."/>
            <person name="Schein J.E."/>
            <person name="Shin H."/>
            <person name="Smailus D."/>
            <person name="Siddiqui A.S."/>
            <person name="Marra M.A."/>
            <person name="Jones S.J.M."/>
            <person name="Holt R."/>
            <person name="Brinkman F.S.L."/>
            <person name="Miyauchi K."/>
            <person name="Fukuda M."/>
            <person name="Davies J.E."/>
            <person name="Mohn W.W."/>
            <person name="Eltis L.D."/>
        </authorList>
    </citation>
    <scope>NUCLEOTIDE SEQUENCE [LARGE SCALE GENOMIC DNA]</scope>
    <source>
        <strain>RHA1</strain>
    </source>
</reference>
<sequence>MSTPASAAPAALVRVPAGTTAGTAVREAGYPSKGPDVVVVVRDAEGQLKDLSWVPDTDVEVEPVAANTDDGRSVIRHSAAHVLAQAVQQEFPEAKLGIGPPIKDGFYYDFAVDRPFTPEDLASLEKRMKKIIKGSQRFSRRVVESLEDARAELAKEPFKLELIDDKSGIDDPEIMEVGGNELTIYDNLDPRTGEKVWGDLCRGPHIPTTKHIPAFKLTRSSAAYWRGNQDNADLQRIYGTAWESAEAQDQHLELLAEAERRDHRKLGSELDLFSFPDELGSGLPVFHPRGGIIRTEMEDYSRKRHVEEGYEFVNTPHITKGHLYEVSGHLDWYRDGMFPAMHIDEELNEDGTVRKPGQDYYLKPMNCPMHNLIFRSRGRSYRELPLRLFEFGSVYRYEKSGVVHGLTRVRGMTQDDAHIYCTREQMRDELATTLQFVLGLLKDYGLDDFYLELSTKNPDKFVGDDAVWEEATATLAEVAESSGLNLVPDPGGAAFYGPKISVQVQDALGRTWQMSTIQLDFNLPERFDLEYTANDGTKQRPVMIHRALFGSIERFFGVLTEHYAGAFPAWLAPVQVVGIPVAETFADHLFDVVKRLKAAGVRAEVDASDDRMQKKIFNNTAQKVPFMLLAGARDVEAGAVSFRFRDGTQVNGVPVDDAVRIVTEWIGRRENASPTAELLQPGKEG</sequence>
<proteinExistence type="inferred from homology"/>
<accession>Q0S1E2</accession>
<protein>
    <recommendedName>
        <fullName evidence="1">Threonine--tRNA ligase</fullName>
        <ecNumber evidence="1">6.1.1.3</ecNumber>
    </recommendedName>
    <alternativeName>
        <fullName evidence="1">Threonyl-tRNA synthetase</fullName>
        <shortName evidence="1">ThrRS</shortName>
    </alternativeName>
</protein>
<name>SYT_RHOJR</name>